<accession>Q08496</accession>
<accession>D6W2E3</accession>
<accession>O00034</accession>
<accession>Q7LGN4</accession>
<gene>
    <name type="primary">DIA2</name>
    <name type="ordered locus">YOR080W</name>
    <name type="ORF">YOR29-31</name>
</gene>
<comment type="function">
    <text evidence="1 3 4 6 7 8 9 10">F-box protein component of a SCF (SKP1-CUL1-F-box protein) E3 ubiquitin-protein ligase complex which mediates the ubiquitination and subsequent proteasomal degradation of target proteins. Probably recognizes and binds to phosphorylated target proteins (By similarity). The SCF(DIA2) complex is specifically involved in the pheromone induced degradation of phosphorylated TEC1. The SCF(DIA2) complex binds to DNA replication origins. Involved in DNA replication, genome stability, and the control of cell cycle, probably through its association to replication origins to facilitate the ubiquitination of another origin-binding protein. Required for invasive growth and growth under alkaline conditions.</text>
</comment>
<comment type="subunit">
    <text evidence="5 9">Component of the SCF(DIA2) complex containing CDC53, SKP1, RBX1 and DIA2. Interacts with SKP1.</text>
</comment>
<comment type="interaction">
    <interactant intactId="EBI-31943">
        <id>Q08496</id>
    </interactant>
    <interactant intactId="EBI-5209">
        <id>Q01454</id>
        <label>CTF4</label>
    </interactant>
    <organismsDiffer>false</organismsDiffer>
    <experiments>5</experiments>
</comment>
<comment type="interaction">
    <interactant intactId="EBI-31943">
        <id>Q08496</id>
    </interactant>
    <interactant intactId="EBI-10533">
        <id>P29469</id>
        <label>MCM2</label>
    </interactant>
    <organismsDiffer>false</organismsDiffer>
    <experiments>4</experiments>
</comment>
<comment type="interaction">
    <interactant intactId="EBI-31943">
        <id>Q08496</id>
    </interactant>
    <interactant intactId="EBI-412442">
        <id>P25588</id>
        <label>MRC1</label>
    </interactant>
    <organismsDiffer>false</organismsDiffer>
    <experiments>11</experiments>
</comment>
<comment type="interaction">
    <interactant intactId="EBI-31943">
        <id>Q08496</id>
    </interactant>
    <interactant intactId="EBI-4090">
        <id>P52286</id>
        <label>SKP1</label>
    </interactant>
    <organismsDiffer>false</organismsDiffer>
    <experiments>4</experiments>
</comment>
<comment type="subcellular location">
    <subcellularLocation>
        <location evidence="11">Nucleus</location>
    </subcellularLocation>
</comment>
<comment type="similarity">
    <text evidence="11">Belongs to the DIA2 family.</text>
</comment>
<comment type="sequence caution" evidence="11">
    <conflict type="erroneous initiation">
        <sequence resource="EMBL-CDS" id="CAA94565"/>
    </conflict>
    <text>Extended N-terminus.</text>
</comment>
<comment type="sequence caution" evidence="11">
    <conflict type="erroneous initiation">
        <sequence resource="EMBL-CDS" id="CAA99273"/>
    </conflict>
    <text>Extended N-terminus.</text>
</comment>
<comment type="sequence caution" evidence="11">
    <conflict type="erroneous initiation">
        <sequence resource="EMBL-CDS" id="CAA99275"/>
    </conflict>
    <text>Extended N-terminus.</text>
</comment>
<feature type="chain" id="PRO_0000233003" description="Protein DIA2">
    <location>
        <begin position="1"/>
        <end position="732"/>
    </location>
</feature>
<feature type="repeat" description="TPR 1">
    <location>
        <begin position="15"/>
        <end position="48"/>
    </location>
</feature>
<feature type="repeat" description="TPR 2">
    <location>
        <begin position="78"/>
        <end position="111"/>
    </location>
</feature>
<feature type="repeat" description="TPR 3">
    <location>
        <begin position="113"/>
        <end position="145"/>
    </location>
</feature>
<feature type="domain" description="F-box" evidence="2">
    <location>
        <begin position="204"/>
        <end position="251"/>
    </location>
</feature>
<feature type="repeat" description="LRR 1">
    <location>
        <begin position="425"/>
        <end position="449"/>
    </location>
</feature>
<feature type="repeat" description="LRR 2">
    <location>
        <begin position="480"/>
        <end position="505"/>
    </location>
</feature>
<feature type="repeat" description="LRR 3">
    <location>
        <begin position="509"/>
        <end position="532"/>
    </location>
</feature>
<feature type="repeat" description="LRR 4">
    <location>
        <begin position="550"/>
        <end position="574"/>
    </location>
</feature>
<feature type="repeat" description="LRR 5">
    <location>
        <begin position="579"/>
        <end position="602"/>
    </location>
</feature>
<feature type="repeat" description="LRR 6">
    <location>
        <begin position="616"/>
        <end position="637"/>
    </location>
</feature>
<feature type="repeat" description="LRR 7">
    <location>
        <begin position="645"/>
        <end position="669"/>
    </location>
</feature>
<feature type="modified residue" description="Phosphoserine" evidence="12">
    <location>
        <position position="393"/>
    </location>
</feature>
<feature type="turn" evidence="13">
    <location>
        <begin position="212"/>
        <end position="214"/>
    </location>
</feature>
<feature type="helix" evidence="13">
    <location>
        <begin position="215"/>
        <end position="219"/>
    </location>
</feature>
<feature type="helix" evidence="13">
    <location>
        <begin position="224"/>
        <end position="230"/>
    </location>
</feature>
<feature type="helix" evidence="13">
    <location>
        <begin position="231"/>
        <end position="233"/>
    </location>
</feature>
<feature type="helix" evidence="13">
    <location>
        <begin position="235"/>
        <end position="242"/>
    </location>
</feature>
<feature type="helix" evidence="13">
    <location>
        <begin position="245"/>
        <end position="247"/>
    </location>
</feature>
<feature type="strand" evidence="13">
    <location>
        <begin position="250"/>
        <end position="256"/>
    </location>
</feature>
<feature type="helix" evidence="13">
    <location>
        <begin position="258"/>
        <end position="271"/>
    </location>
</feature>
<feature type="strand" evidence="13">
    <location>
        <begin position="280"/>
        <end position="290"/>
    </location>
</feature>
<feature type="helix" evidence="13">
    <location>
        <begin position="291"/>
        <end position="304"/>
    </location>
</feature>
<feature type="strand" evidence="13">
    <location>
        <begin position="310"/>
        <end position="316"/>
    </location>
</feature>
<feature type="helix" evidence="13">
    <location>
        <begin position="323"/>
        <end position="333"/>
    </location>
</feature>
<feature type="helix" evidence="13">
    <location>
        <begin position="336"/>
        <end position="339"/>
    </location>
</feature>
<feature type="strand" evidence="13">
    <location>
        <begin position="342"/>
        <end position="350"/>
    </location>
</feature>
<feature type="helix" evidence="13">
    <location>
        <begin position="356"/>
        <end position="363"/>
    </location>
</feature>
<feature type="strand" evidence="13">
    <location>
        <begin position="369"/>
        <end position="377"/>
    </location>
</feature>
<feature type="strand" evidence="13">
    <location>
        <begin position="427"/>
        <end position="432"/>
    </location>
</feature>
<feature type="turn" evidence="13">
    <location>
        <begin position="434"/>
        <end position="436"/>
    </location>
</feature>
<feature type="helix" evidence="13">
    <location>
        <begin position="443"/>
        <end position="448"/>
    </location>
</feature>
<feature type="strand" evidence="13">
    <location>
        <begin position="456"/>
        <end position="461"/>
    </location>
</feature>
<feature type="helix" evidence="13">
    <location>
        <begin position="469"/>
        <end position="472"/>
    </location>
</feature>
<feature type="turn" evidence="13">
    <location>
        <begin position="473"/>
        <end position="475"/>
    </location>
</feature>
<feature type="helix" evidence="13">
    <location>
        <begin position="476"/>
        <end position="479"/>
    </location>
</feature>
<feature type="strand" evidence="13">
    <location>
        <begin position="485"/>
        <end position="489"/>
    </location>
</feature>
<feature type="helix" evidence="13">
    <location>
        <begin position="496"/>
        <end position="505"/>
    </location>
</feature>
<feature type="strand" evidence="13">
    <location>
        <begin position="513"/>
        <end position="518"/>
    </location>
</feature>
<feature type="helix" evidence="13">
    <location>
        <begin position="546"/>
        <end position="550"/>
    </location>
</feature>
<feature type="strand" evidence="13">
    <location>
        <begin position="554"/>
        <end position="557"/>
    </location>
</feature>
<feature type="helix" evidence="13">
    <location>
        <begin position="565"/>
        <end position="573"/>
    </location>
</feature>
<feature type="strand" evidence="13">
    <location>
        <begin position="579"/>
        <end position="581"/>
    </location>
</feature>
<feature type="strand" evidence="13">
    <location>
        <begin position="584"/>
        <end position="586"/>
    </location>
</feature>
<feature type="strand" evidence="13">
    <location>
        <begin position="599"/>
        <end position="601"/>
    </location>
</feature>
<feature type="helix" evidence="13">
    <location>
        <begin position="603"/>
        <end position="605"/>
    </location>
</feature>
<feature type="helix" evidence="13">
    <location>
        <begin position="609"/>
        <end position="615"/>
    </location>
</feature>
<feature type="turn" evidence="13">
    <location>
        <begin position="616"/>
        <end position="618"/>
    </location>
</feature>
<feature type="strand" evidence="13">
    <location>
        <begin position="621"/>
        <end position="623"/>
    </location>
</feature>
<feature type="helix" evidence="13">
    <location>
        <begin position="632"/>
        <end position="640"/>
    </location>
</feature>
<feature type="helix" evidence="13">
    <location>
        <begin position="642"/>
        <end position="644"/>
    </location>
</feature>
<feature type="strand" evidence="13">
    <location>
        <begin position="650"/>
        <end position="652"/>
    </location>
</feature>
<feature type="helix" evidence="13">
    <location>
        <begin position="661"/>
        <end position="671"/>
    </location>
</feature>
<feature type="strand" evidence="13">
    <location>
        <begin position="684"/>
        <end position="688"/>
    </location>
</feature>
<feature type="helix" evidence="13">
    <location>
        <begin position="697"/>
        <end position="705"/>
    </location>
</feature>
<feature type="strand" evidence="13">
    <location>
        <begin position="708"/>
        <end position="713"/>
    </location>
</feature>
<feature type="turn" evidence="13">
    <location>
        <begin position="725"/>
        <end position="727"/>
    </location>
</feature>
<proteinExistence type="evidence at protein level"/>
<sequence length="732" mass="85070">MSSPGNSGVAIDSTVLKAIELGTRLFKSGEYLQAKRIFTNALRVCDSYSQEQIMRIRNAYQLDTARPDNKRLYHPRYIKILDNICACYEKLNDLKSCLDVSQRLLKLEPGNIKCYIRCTRTLIKLKDWKRAYKTCSRGLQLCNNDSNHLRQQKQFIKNNMVQKQDGKRSYIDPLEETKIAKKKKNNNVLESLPKKKIKGSTKKTDLVGNLPIEILPIIFQRFTTKELVTLSLVCNKWRDKILYHLDCFQEFNLAPINFKNFVKFMDFLQQNFTRTYRKYILSQVKVSSRITSEELRITQLLFSKMPKCINIERLILSMPTLTTTQIFKLMVRGGTDFFTRLLELSLMITYRPDKQHELEILQTCPLLKKIELIFVNSLVPIFDGNNSVGRDGSFNVMARHTNMQISTADNDEQGIVEEKVIYSELEKITLICDKKKIKNFPLCRALLRGQFPLLQKLTITGVTFPMNNQDIMNFQWLLNFPDLKELWIEDNDNCELSKFLQLLKFSNVWKNLEKLTFRENKLYPIVNLDEDQPVTNDDEVPSMLFYKENLQNLEKLDLMGTSISGSALTRLCEQEYLDGRKLRSLNIGNCPNIQFPNNHAHTARMILDVNAVLKRLSKLEEINLSHLSSLNDSTMKSFIINVPFLENLKRLDISHNFEITGISIYEFLKKFQMDHDNEAGGQPLAYLNIDGCSQVSHITVNMIRAQNLVTQVDCVYERDVWRKFGINSYSYS</sequence>
<evidence type="ECO:0000250" key="1"/>
<evidence type="ECO:0000255" key="2">
    <source>
        <dbReference type="PROSITE-ProRule" id="PRU00080"/>
    </source>
</evidence>
<evidence type="ECO:0000269" key="3">
    <source>
    </source>
</evidence>
<evidence type="ECO:0000269" key="4">
    <source>
    </source>
</evidence>
<evidence type="ECO:0000269" key="5">
    <source>
    </source>
</evidence>
<evidence type="ECO:0000269" key="6">
    <source>
    </source>
</evidence>
<evidence type="ECO:0000269" key="7">
    <source>
    </source>
</evidence>
<evidence type="ECO:0000269" key="8">
    <source>
    </source>
</evidence>
<evidence type="ECO:0000269" key="9">
    <source>
    </source>
</evidence>
<evidence type="ECO:0000269" key="10">
    <source>
    </source>
</evidence>
<evidence type="ECO:0000305" key="11"/>
<evidence type="ECO:0007744" key="12">
    <source>
    </source>
</evidence>
<evidence type="ECO:0007829" key="13">
    <source>
        <dbReference type="PDB" id="7PMK"/>
    </source>
</evidence>
<dbReference type="EMBL" id="Z70678">
    <property type="protein sequence ID" value="CAA94565.1"/>
    <property type="status" value="ALT_INIT"/>
    <property type="molecule type" value="Genomic_DNA"/>
</dbReference>
<dbReference type="EMBL" id="Z74988">
    <property type="protein sequence ID" value="CAA99273.1"/>
    <property type="status" value="ALT_INIT"/>
    <property type="molecule type" value="Genomic_DNA"/>
</dbReference>
<dbReference type="EMBL" id="Z74989">
    <property type="protein sequence ID" value="CAA99275.1"/>
    <property type="status" value="ALT_INIT"/>
    <property type="molecule type" value="Genomic_DNA"/>
</dbReference>
<dbReference type="EMBL" id="BK006948">
    <property type="protein sequence ID" value="DAA10859.2"/>
    <property type="molecule type" value="Genomic_DNA"/>
</dbReference>
<dbReference type="PIR" id="S66963">
    <property type="entry name" value="S66963"/>
</dbReference>
<dbReference type="RefSeq" id="NP_014723.2">
    <property type="nucleotide sequence ID" value="NM_001183499.1"/>
</dbReference>
<dbReference type="PDB" id="7PMK">
    <property type="method" value="EM"/>
    <property type="resolution" value="3.20 A"/>
    <property type="chains" value="L=1-732"/>
</dbReference>
<dbReference type="PDB" id="7PMN">
    <property type="method" value="EM"/>
    <property type="resolution" value="3.20 A"/>
    <property type="chains" value="L=1-732"/>
</dbReference>
<dbReference type="PDBsum" id="7PMK"/>
<dbReference type="PDBsum" id="7PMN"/>
<dbReference type="EMDB" id="EMD-13537"/>
<dbReference type="EMDB" id="EMD-13539"/>
<dbReference type="SMR" id="Q08496"/>
<dbReference type="BioGRID" id="34479">
    <property type="interactions" value="676"/>
</dbReference>
<dbReference type="ComplexPortal" id="CPX-3250">
    <property type="entry name" value="SCF-Dia2 ubiquitin ligase complex"/>
</dbReference>
<dbReference type="DIP" id="DIP-6496N"/>
<dbReference type="FunCoup" id="Q08496">
    <property type="interactions" value="142"/>
</dbReference>
<dbReference type="IntAct" id="Q08496">
    <property type="interactions" value="46"/>
</dbReference>
<dbReference type="MINT" id="Q08496"/>
<dbReference type="STRING" id="4932.YOR080W"/>
<dbReference type="iPTMnet" id="Q08496"/>
<dbReference type="PaxDb" id="4932-YOR080W"/>
<dbReference type="PeptideAtlas" id="Q08496"/>
<dbReference type="EnsemblFungi" id="YOR080W_mRNA">
    <property type="protein sequence ID" value="YOR080W"/>
    <property type="gene ID" value="YOR080W"/>
</dbReference>
<dbReference type="GeneID" id="854247"/>
<dbReference type="KEGG" id="sce:YOR080W"/>
<dbReference type="AGR" id="SGD:S000005606"/>
<dbReference type="SGD" id="S000005606">
    <property type="gene designation" value="DIA2"/>
</dbReference>
<dbReference type="VEuPathDB" id="FungiDB:YOR080W"/>
<dbReference type="eggNOG" id="ENOG502QRSD">
    <property type="taxonomic scope" value="Eukaryota"/>
</dbReference>
<dbReference type="HOGENOM" id="CLU_023422_0_0_1"/>
<dbReference type="InParanoid" id="Q08496"/>
<dbReference type="OMA" id="ISCKGYL"/>
<dbReference type="OrthoDB" id="629492at2759"/>
<dbReference type="BioCyc" id="YEAST:G3O-33617-MONOMER"/>
<dbReference type="BioGRID-ORCS" id="854247">
    <property type="hits" value="0 hits in 10 CRISPR screens"/>
</dbReference>
<dbReference type="PRO" id="PR:Q08496"/>
<dbReference type="Proteomes" id="UP000002311">
    <property type="component" value="Chromosome XV"/>
</dbReference>
<dbReference type="RNAct" id="Q08496">
    <property type="molecule type" value="protein"/>
</dbReference>
<dbReference type="GO" id="GO:0000781">
    <property type="term" value="C:chromosome, telomeric region"/>
    <property type="evidence" value="ECO:0007669"/>
    <property type="project" value="GOC"/>
</dbReference>
<dbReference type="GO" id="GO:0043596">
    <property type="term" value="C:nuclear replication fork"/>
    <property type="evidence" value="ECO:0000314"/>
    <property type="project" value="SGD"/>
</dbReference>
<dbReference type="GO" id="GO:0005634">
    <property type="term" value="C:nucleus"/>
    <property type="evidence" value="ECO:0000314"/>
    <property type="project" value="SGD"/>
</dbReference>
<dbReference type="GO" id="GO:0019005">
    <property type="term" value="C:SCF ubiquitin ligase complex"/>
    <property type="evidence" value="ECO:0000314"/>
    <property type="project" value="SGD"/>
</dbReference>
<dbReference type="GO" id="GO:0003688">
    <property type="term" value="F:DNA replication origin binding"/>
    <property type="evidence" value="ECO:0000314"/>
    <property type="project" value="SGD"/>
</dbReference>
<dbReference type="GO" id="GO:0001403">
    <property type="term" value="P:invasive growth in response to glucose limitation"/>
    <property type="evidence" value="ECO:0000316"/>
    <property type="project" value="SGD"/>
</dbReference>
<dbReference type="GO" id="GO:1902979">
    <property type="term" value="P:mitotic DNA replication termination"/>
    <property type="evidence" value="ECO:0000315"/>
    <property type="project" value="SGD"/>
</dbReference>
<dbReference type="GO" id="GO:0031573">
    <property type="term" value="P:mitotic intra-S DNA damage checkpoint signaling"/>
    <property type="evidence" value="ECO:0000303"/>
    <property type="project" value="ComplexPortal"/>
</dbReference>
<dbReference type="GO" id="GO:0016567">
    <property type="term" value="P:protein ubiquitination"/>
    <property type="evidence" value="ECO:0000315"/>
    <property type="project" value="SGD"/>
</dbReference>
<dbReference type="GO" id="GO:0032984">
    <property type="term" value="P:protein-containing complex disassembly"/>
    <property type="evidence" value="ECO:0000315"/>
    <property type="project" value="SGD"/>
</dbReference>
<dbReference type="GO" id="GO:0006275">
    <property type="term" value="P:regulation of DNA replication"/>
    <property type="evidence" value="ECO:0000315"/>
    <property type="project" value="SGD"/>
</dbReference>
<dbReference type="GO" id="GO:0031146">
    <property type="term" value="P:SCF-dependent proteasomal ubiquitin-dependent protein catabolic process"/>
    <property type="evidence" value="ECO:0000314"/>
    <property type="project" value="SGD"/>
</dbReference>
<dbReference type="GO" id="GO:0030466">
    <property type="term" value="P:silent mating-type cassette heterochromatin formation"/>
    <property type="evidence" value="ECO:0000314"/>
    <property type="project" value="ComplexPortal"/>
</dbReference>
<dbReference type="GO" id="GO:0031509">
    <property type="term" value="P:subtelomeric heterochromatin formation"/>
    <property type="evidence" value="ECO:0000315"/>
    <property type="project" value="SGD"/>
</dbReference>
<dbReference type="GO" id="GO:0006511">
    <property type="term" value="P:ubiquitin-dependent protein catabolic process"/>
    <property type="evidence" value="ECO:0000314"/>
    <property type="project" value="ComplexPortal"/>
</dbReference>
<dbReference type="CDD" id="cd22142">
    <property type="entry name" value="F-box_ScDIA2-like"/>
    <property type="match status" value="1"/>
</dbReference>
<dbReference type="Gene3D" id="3.80.10.10">
    <property type="entry name" value="Ribonuclease Inhibitor"/>
    <property type="match status" value="3"/>
</dbReference>
<dbReference type="Gene3D" id="1.25.40.10">
    <property type="entry name" value="Tetratricopeptide repeat domain"/>
    <property type="match status" value="1"/>
</dbReference>
<dbReference type="InterPro" id="IPR036047">
    <property type="entry name" value="F-box-like_dom_sf"/>
</dbReference>
<dbReference type="InterPro" id="IPR001810">
    <property type="entry name" value="F-box_dom"/>
</dbReference>
<dbReference type="InterPro" id="IPR001611">
    <property type="entry name" value="Leu-rich_rpt"/>
</dbReference>
<dbReference type="InterPro" id="IPR006553">
    <property type="entry name" value="Leu-rich_rpt_Cys-con_subtyp"/>
</dbReference>
<dbReference type="InterPro" id="IPR032675">
    <property type="entry name" value="LRR_dom_sf"/>
</dbReference>
<dbReference type="InterPro" id="IPR011990">
    <property type="entry name" value="TPR-like_helical_dom_sf"/>
</dbReference>
<dbReference type="PANTHER" id="PTHR13318:SF95">
    <property type="entry name" value="F-BOX PROTEIN YLR352W"/>
    <property type="match status" value="1"/>
</dbReference>
<dbReference type="PANTHER" id="PTHR13318">
    <property type="entry name" value="PARTNER OF PAIRED, ISOFORM B-RELATED"/>
    <property type="match status" value="1"/>
</dbReference>
<dbReference type="Pfam" id="PF00646">
    <property type="entry name" value="F-box"/>
    <property type="match status" value="1"/>
</dbReference>
<dbReference type="SMART" id="SM00256">
    <property type="entry name" value="FBOX"/>
    <property type="match status" value="1"/>
</dbReference>
<dbReference type="SMART" id="SM00367">
    <property type="entry name" value="LRR_CC"/>
    <property type="match status" value="3"/>
</dbReference>
<dbReference type="SUPFAM" id="SSF81383">
    <property type="entry name" value="F-box domain"/>
    <property type="match status" value="1"/>
</dbReference>
<dbReference type="SUPFAM" id="SSF52047">
    <property type="entry name" value="RNI-like"/>
    <property type="match status" value="1"/>
</dbReference>
<dbReference type="SUPFAM" id="SSF48452">
    <property type="entry name" value="TPR-like"/>
    <property type="match status" value="1"/>
</dbReference>
<dbReference type="PROSITE" id="PS50181">
    <property type="entry name" value="FBOX"/>
    <property type="match status" value="1"/>
</dbReference>
<dbReference type="PROSITE" id="PS51450">
    <property type="entry name" value="LRR"/>
    <property type="match status" value="4"/>
</dbReference>
<dbReference type="PROSITE" id="PS50293">
    <property type="entry name" value="TPR_REGION"/>
    <property type="match status" value="2"/>
</dbReference>
<reference key="1">
    <citation type="journal article" date="1997" name="Yeast">
        <title>The sequence of a 54.7 kb fragment of yeast chromosome XV reveals the presence of two tRNAs and 24 new open reading frames.</title>
        <authorList>
            <person name="Valens M."/>
            <person name="Bohn C."/>
            <person name="Daignan-Fornier B."/>
            <person name="Dang V.-D."/>
            <person name="Bolotin-Fukuhara M."/>
        </authorList>
    </citation>
    <scope>NUCLEOTIDE SEQUENCE [GENOMIC DNA]</scope>
</reference>
<reference key="2">
    <citation type="journal article" date="1997" name="Nature">
        <title>The nucleotide sequence of Saccharomyces cerevisiae chromosome XV.</title>
        <authorList>
            <person name="Dujon B."/>
            <person name="Albermann K."/>
            <person name="Aldea M."/>
            <person name="Alexandraki D."/>
            <person name="Ansorge W."/>
            <person name="Arino J."/>
            <person name="Benes V."/>
            <person name="Bohn C."/>
            <person name="Bolotin-Fukuhara M."/>
            <person name="Bordonne R."/>
            <person name="Boyer J."/>
            <person name="Camasses A."/>
            <person name="Casamayor A."/>
            <person name="Casas C."/>
            <person name="Cheret G."/>
            <person name="Cziepluch C."/>
            <person name="Daignan-Fornier B."/>
            <person name="Dang V.-D."/>
            <person name="de Haan M."/>
            <person name="Delius H."/>
            <person name="Durand P."/>
            <person name="Fairhead C."/>
            <person name="Feldmann H."/>
            <person name="Gaillon L."/>
            <person name="Galisson F."/>
            <person name="Gamo F.-J."/>
            <person name="Gancedo C."/>
            <person name="Goffeau A."/>
            <person name="Goulding S.E."/>
            <person name="Grivell L.A."/>
            <person name="Habbig B."/>
            <person name="Hand N.J."/>
            <person name="Hani J."/>
            <person name="Hattenhorst U."/>
            <person name="Hebling U."/>
            <person name="Hernando Y."/>
            <person name="Herrero E."/>
            <person name="Heumann K."/>
            <person name="Hiesel R."/>
            <person name="Hilger F."/>
            <person name="Hofmann B."/>
            <person name="Hollenberg C.P."/>
            <person name="Hughes B."/>
            <person name="Jauniaux J.-C."/>
            <person name="Kalogeropoulos A."/>
            <person name="Katsoulou C."/>
            <person name="Kordes E."/>
            <person name="Lafuente M.J."/>
            <person name="Landt O."/>
            <person name="Louis E.J."/>
            <person name="Maarse A.C."/>
            <person name="Madania A."/>
            <person name="Mannhaupt G."/>
            <person name="Marck C."/>
            <person name="Martin R.P."/>
            <person name="Mewes H.-W."/>
            <person name="Michaux G."/>
            <person name="Paces V."/>
            <person name="Parle-McDermott A.G."/>
            <person name="Pearson B.M."/>
            <person name="Perrin A."/>
            <person name="Pettersson B."/>
            <person name="Poch O."/>
            <person name="Pohl T.M."/>
            <person name="Poirey R."/>
            <person name="Portetelle D."/>
            <person name="Pujol A."/>
            <person name="Purnelle B."/>
            <person name="Ramezani Rad M."/>
            <person name="Rechmann S."/>
            <person name="Schwager C."/>
            <person name="Schweizer M."/>
            <person name="Sor F."/>
            <person name="Sterky F."/>
            <person name="Tarassov I.A."/>
            <person name="Teodoru C."/>
            <person name="Tettelin H."/>
            <person name="Thierry A."/>
            <person name="Tobiasch E."/>
            <person name="Tzermia M."/>
            <person name="Uhlen M."/>
            <person name="Unseld M."/>
            <person name="Valens M."/>
            <person name="Vandenbol M."/>
            <person name="Vetter I."/>
            <person name="Vlcek C."/>
            <person name="Voet M."/>
            <person name="Volckaert G."/>
            <person name="Voss H."/>
            <person name="Wambutt R."/>
            <person name="Wedler H."/>
            <person name="Wiemann S."/>
            <person name="Winsor B."/>
            <person name="Wolfe K.H."/>
            <person name="Zollner A."/>
            <person name="Zumstein E."/>
            <person name="Kleine K."/>
        </authorList>
    </citation>
    <scope>NUCLEOTIDE SEQUENCE [LARGE SCALE GENOMIC DNA]</scope>
    <source>
        <strain>ATCC 204508 / S288c</strain>
    </source>
</reference>
<reference key="3">
    <citation type="journal article" date="2014" name="G3 (Bethesda)">
        <title>The reference genome sequence of Saccharomyces cerevisiae: Then and now.</title>
        <authorList>
            <person name="Engel S.R."/>
            <person name="Dietrich F.S."/>
            <person name="Fisk D.G."/>
            <person name="Binkley G."/>
            <person name="Balakrishnan R."/>
            <person name="Costanzo M.C."/>
            <person name="Dwight S.S."/>
            <person name="Hitz B.C."/>
            <person name="Karra K."/>
            <person name="Nash R.S."/>
            <person name="Weng S."/>
            <person name="Wong E.D."/>
            <person name="Lloyd P."/>
            <person name="Skrzypek M.S."/>
            <person name="Miyasato S.R."/>
            <person name="Simison M."/>
            <person name="Cherry J.M."/>
        </authorList>
    </citation>
    <scope>GENOME REANNOTATION</scope>
    <source>
        <strain>ATCC 204508 / S288c</strain>
    </source>
</reference>
<reference key="4">
    <citation type="journal article" date="1999" name="Philos. Trans. R. Soc. Lond., B, Biol. Sci.">
        <title>SCF ubiquitin protein ligases and phosphorylation-dependent proteolysis.</title>
        <authorList>
            <person name="Willems A.R."/>
            <person name="Goh T."/>
            <person name="Taylor L."/>
            <person name="Chernushevich I."/>
            <person name="Shevchenko A."/>
            <person name="Tyers M."/>
        </authorList>
    </citation>
    <scope>DOMAIN</scope>
    <scope>FUNCTION</scope>
</reference>
<reference key="5">
    <citation type="journal article" date="2000" name="Genetics">
        <title>Genetic analysis reveals that FLO11 upregulation and cell polarization independently regulate invasive growth in Saccharomyces cerevisiae.</title>
        <authorList>
            <person name="Palecek S.P."/>
            <person name="Parikh A.S."/>
            <person name="Kron S.J."/>
        </authorList>
    </citation>
    <scope>FUNCTION</scope>
</reference>
<reference key="6">
    <citation type="journal article" date="2004" name="Cell">
        <title>Pheromone-dependent destruction of the Tec1 transcription factor is required for MAP kinase signaling specificity in yeast.</title>
        <authorList>
            <person name="Bao M.Z."/>
            <person name="Schwartz M.A."/>
            <person name="Cantin G.T."/>
            <person name="Yates J.R. III"/>
            <person name="Madhani H.D."/>
        </authorList>
    </citation>
    <scope>FUNCTION</scope>
</reference>
<reference key="7">
    <citation type="journal article" date="2004" name="Genetics">
        <title>Uncovering novel cell cycle players through the inactivation of securin in budding yeast.</title>
        <authorList>
            <person name="Sarin S."/>
            <person name="Ross K.E."/>
            <person name="Boucher L."/>
            <person name="Green Y."/>
            <person name="Tyers M."/>
            <person name="Cohen-Fix O."/>
        </authorList>
    </citation>
    <scope>FUNCTION</scope>
</reference>
<reference key="8">
    <citation type="journal article" date="2004" name="J. Biol. Chem.">
        <title>Copper and iron are the limiting factors for growth of the yeast Saccharomyces cerevisiae in an alkaline environment.</title>
        <authorList>
            <person name="Serrano R."/>
            <person name="Bernal D."/>
            <person name="Simon E."/>
            <person name="Arino J."/>
        </authorList>
    </citation>
    <scope>FUNCTION</scope>
</reference>
<reference key="9">
    <citation type="journal article" date="2004" name="Proteins">
        <title>Functional interaction of 13 yeast SCF complexes with a set of yeast E2 enzymes in vitro.</title>
        <authorList>
            <person name="Kus B.M."/>
            <person name="Caldon C.E."/>
            <person name="Andorn-Broza R."/>
            <person name="Edwards A.M."/>
        </authorList>
    </citation>
    <scope>INTERACTION WITH SKP1</scope>
    <scope>RECONSTITUTION OF THE SCF(DIA2) COMPLEX</scope>
</reference>
<reference key="10">
    <citation type="journal article" date="2006" name="Cell">
        <title>A DNA integrity network in the yeast Saccharomyces cerevisiae.</title>
        <authorList>
            <person name="Pan X."/>
            <person name="Ye P."/>
            <person name="Yuan D.S."/>
            <person name="Wang X."/>
            <person name="Bader J.S."/>
            <person name="Boeke J.D."/>
        </authorList>
    </citation>
    <scope>FUNCTION</scope>
</reference>
<reference key="11">
    <citation type="journal article" date="2006" name="Mol. Biol. Cell">
        <title>The F-box protein Dia2 regulates DNA replication.</title>
        <authorList>
            <person name="Koepp D.M."/>
            <person name="Kile A.C."/>
            <person name="Swaminathan S."/>
            <person name="Rodriguez-Rivera V."/>
        </authorList>
    </citation>
    <scope>IDENTIFICATION IN THE SCF(DIA2) COMPLEX</scope>
    <scope>FUNCTION OF THE SCF(DIA2) COMPLEX</scope>
</reference>
<reference key="12">
    <citation type="journal article" date="2008" name="Mol. Cell. Proteomics">
        <title>A multidimensional chromatography technology for in-depth phosphoproteome analysis.</title>
        <authorList>
            <person name="Albuquerque C.P."/>
            <person name="Smolka M.B."/>
            <person name="Payne S.H."/>
            <person name="Bafna V."/>
            <person name="Eng J."/>
            <person name="Zhou H."/>
        </authorList>
    </citation>
    <scope>PHOSPHORYLATION [LARGE SCALE ANALYSIS] AT SER-393</scope>
    <scope>IDENTIFICATION BY MASS SPECTROMETRY [LARGE SCALE ANALYSIS]</scope>
</reference>
<reference key="13">
    <citation type="journal article" date="2009" name="Curr. Biol.">
        <title>The amino-terminal TPR domain of Dia2 tethers SCF(Dia2) to the replisome progression complex.</title>
        <authorList>
            <person name="Morohashi H."/>
            <person name="Maculins T."/>
            <person name="Labib K."/>
        </authorList>
    </citation>
    <scope>IDENTIFICATION OF INITIATION SITE</scope>
    <source>
        <strain>ATCC 208353 / W303-1A</strain>
    </source>
</reference>
<protein>
    <recommendedName>
        <fullName>Protein DIA2</fullName>
    </recommendedName>
    <alternativeName>
        <fullName>Digs into agar protein 2</fullName>
    </alternativeName>
</protein>
<organism>
    <name type="scientific">Saccharomyces cerevisiae (strain ATCC 204508 / S288c)</name>
    <name type="common">Baker's yeast</name>
    <dbReference type="NCBI Taxonomy" id="559292"/>
    <lineage>
        <taxon>Eukaryota</taxon>
        <taxon>Fungi</taxon>
        <taxon>Dikarya</taxon>
        <taxon>Ascomycota</taxon>
        <taxon>Saccharomycotina</taxon>
        <taxon>Saccharomycetes</taxon>
        <taxon>Saccharomycetales</taxon>
        <taxon>Saccharomycetaceae</taxon>
        <taxon>Saccharomyces</taxon>
    </lineage>
</organism>
<name>DIA2_YEAST</name>
<keyword id="KW-0002">3D-structure</keyword>
<keyword id="KW-0131">Cell cycle</keyword>
<keyword id="KW-0433">Leucine-rich repeat</keyword>
<keyword id="KW-0539">Nucleus</keyword>
<keyword id="KW-0597">Phosphoprotein</keyword>
<keyword id="KW-1185">Reference proteome</keyword>
<keyword id="KW-0677">Repeat</keyword>
<keyword id="KW-0802">TPR repeat</keyword>
<keyword id="KW-0833">Ubl conjugation pathway</keyword>